<proteinExistence type="inferred from homology"/>
<protein>
    <recommendedName>
        <fullName>Ubiquitin-fold modifier 1</fullName>
    </recommendedName>
</protein>
<reference key="1">
    <citation type="journal article" date="2003" name="PLoS Biol.">
        <title>The genome sequence of Caenorhabditis briggsae: a platform for comparative genomics.</title>
        <authorList>
            <person name="Stein L.D."/>
            <person name="Bao Z."/>
            <person name="Blasiar D."/>
            <person name="Blumenthal T."/>
            <person name="Brent M.R."/>
            <person name="Chen N."/>
            <person name="Chinwalla A."/>
            <person name="Clarke L."/>
            <person name="Clee C."/>
            <person name="Coghlan A."/>
            <person name="Coulson A."/>
            <person name="D'Eustachio P."/>
            <person name="Fitch D.H.A."/>
            <person name="Fulton L.A."/>
            <person name="Fulton R.E."/>
            <person name="Griffiths-Jones S."/>
            <person name="Harris T.W."/>
            <person name="Hillier L.W."/>
            <person name="Kamath R."/>
            <person name="Kuwabara P.E."/>
            <person name="Mardis E.R."/>
            <person name="Marra M.A."/>
            <person name="Miner T.L."/>
            <person name="Minx P."/>
            <person name="Mullikin J.C."/>
            <person name="Plumb R.W."/>
            <person name="Rogers J."/>
            <person name="Schein J.E."/>
            <person name="Sohrmann M."/>
            <person name="Spieth J."/>
            <person name="Stajich J.E."/>
            <person name="Wei C."/>
            <person name="Willey D."/>
            <person name="Wilson R.K."/>
            <person name="Durbin R.M."/>
            <person name="Waterston R.H."/>
        </authorList>
    </citation>
    <scope>NUCLEOTIDE SEQUENCE [LARGE SCALE GENOMIC DNA]</scope>
    <source>
        <strain>AF16</strain>
    </source>
</reference>
<dbReference type="EMBL" id="HE600962">
    <property type="protein sequence ID" value="CAP31259.1"/>
    <property type="molecule type" value="Genomic_DNA"/>
</dbReference>
<dbReference type="SMR" id="Q61E22"/>
<dbReference type="FunCoup" id="Q61E22">
    <property type="interactions" value="1643"/>
</dbReference>
<dbReference type="STRING" id="6238.Q61E22"/>
<dbReference type="EnsemblMetazoa" id="CBG12253.1">
    <property type="protein sequence ID" value="CBG12253.1"/>
    <property type="gene ID" value="WBGene00033229"/>
</dbReference>
<dbReference type="KEGG" id="cbr:CBG_12253"/>
<dbReference type="CTD" id="8584664"/>
<dbReference type="WormBase" id="CBG12253">
    <property type="protein sequence ID" value="CBP17483"/>
    <property type="gene ID" value="WBGene00033229"/>
    <property type="gene designation" value="Cbr-ufm-1"/>
</dbReference>
<dbReference type="eggNOG" id="KOG3483">
    <property type="taxonomic scope" value="Eukaryota"/>
</dbReference>
<dbReference type="HOGENOM" id="CLU_175114_0_0_1"/>
<dbReference type="InParanoid" id="Q61E22"/>
<dbReference type="OMA" id="MEHAVGK"/>
<dbReference type="OrthoDB" id="284357at2759"/>
<dbReference type="Proteomes" id="UP000008549">
    <property type="component" value="Unassembled WGS sequence"/>
</dbReference>
<dbReference type="GO" id="GO:0005737">
    <property type="term" value="C:cytoplasm"/>
    <property type="evidence" value="ECO:0000318"/>
    <property type="project" value="GO_Central"/>
</dbReference>
<dbReference type="GO" id="GO:0005634">
    <property type="term" value="C:nucleus"/>
    <property type="evidence" value="ECO:0000318"/>
    <property type="project" value="GO_Central"/>
</dbReference>
<dbReference type="GO" id="GO:0071569">
    <property type="term" value="P:protein ufmylation"/>
    <property type="evidence" value="ECO:0007669"/>
    <property type="project" value="InterPro"/>
</dbReference>
<dbReference type="GO" id="GO:0034976">
    <property type="term" value="P:response to endoplasmic reticulum stress"/>
    <property type="evidence" value="ECO:0000318"/>
    <property type="project" value="GO_Central"/>
</dbReference>
<dbReference type="GO" id="GO:0061709">
    <property type="term" value="P:reticulophagy"/>
    <property type="evidence" value="ECO:0000318"/>
    <property type="project" value="GO_Central"/>
</dbReference>
<dbReference type="CDD" id="cd01766">
    <property type="entry name" value="Ubl_UFM1"/>
    <property type="match status" value="1"/>
</dbReference>
<dbReference type="FunFam" id="3.10.20.90:FF:000044">
    <property type="entry name" value="Ubiquitin-fold modifier 1"/>
    <property type="match status" value="1"/>
</dbReference>
<dbReference type="Gene3D" id="3.10.20.90">
    <property type="entry name" value="Phosphatidylinositol 3-kinase Catalytic Subunit, Chain A, domain 1"/>
    <property type="match status" value="1"/>
</dbReference>
<dbReference type="InterPro" id="IPR029071">
    <property type="entry name" value="Ubiquitin-like_domsf"/>
</dbReference>
<dbReference type="InterPro" id="IPR005375">
    <property type="entry name" value="UFM1"/>
</dbReference>
<dbReference type="PANTHER" id="PTHR15825">
    <property type="entry name" value="UBIQUITIN-FOLD MODIFIER 1"/>
    <property type="match status" value="1"/>
</dbReference>
<dbReference type="PANTHER" id="PTHR15825:SF0">
    <property type="entry name" value="UBIQUITIN-FOLD MODIFIER 1"/>
    <property type="match status" value="1"/>
</dbReference>
<dbReference type="Pfam" id="PF03671">
    <property type="entry name" value="Ufm1"/>
    <property type="match status" value="1"/>
</dbReference>
<dbReference type="PIRSF" id="PIRSF038027">
    <property type="entry name" value="Ubiquitin-like_Ufm1"/>
    <property type="match status" value="1"/>
</dbReference>
<dbReference type="SUPFAM" id="SSF54236">
    <property type="entry name" value="Ubiquitin-like"/>
    <property type="match status" value="1"/>
</dbReference>
<organism>
    <name type="scientific">Caenorhabditis briggsae</name>
    <dbReference type="NCBI Taxonomy" id="6238"/>
    <lineage>
        <taxon>Eukaryota</taxon>
        <taxon>Metazoa</taxon>
        <taxon>Ecdysozoa</taxon>
        <taxon>Nematoda</taxon>
        <taxon>Chromadorea</taxon>
        <taxon>Rhabditida</taxon>
        <taxon>Rhabditina</taxon>
        <taxon>Rhabditomorpha</taxon>
        <taxon>Rhabditoidea</taxon>
        <taxon>Rhabditidae</taxon>
        <taxon>Peloderinae</taxon>
        <taxon>Caenorhabditis</taxon>
    </lineage>
</organism>
<evidence type="ECO:0000250" key="1">
    <source>
        <dbReference type="UniProtKB" id="P34661"/>
    </source>
</evidence>
<evidence type="ECO:0000250" key="2">
    <source>
        <dbReference type="UniProtKB" id="P61960"/>
    </source>
</evidence>
<evidence type="ECO:0000255" key="3"/>
<evidence type="ECO:0000305" key="4"/>
<evidence type="ECO:0000312" key="5">
    <source>
        <dbReference type="WormBase" id="CBG12253"/>
    </source>
</evidence>
<accession>Q61E22</accession>
<accession>A8XF37</accession>
<gene>
    <name evidence="5" type="primary">ufm-1</name>
    <name evidence="5" type="ORF">CBG12253</name>
</gene>
<sequence>MSGEASAPAAKVTFKITLTSDPKLPFKVLSVPEAAPFTSVLRYAAEEFKVPAATSAIITNDGVGINPAQSAGNIFLKHGSELRLIPRDRVGGF</sequence>
<keyword id="KW-1017">Isopeptide bond</keyword>
<keyword id="KW-1185">Reference proteome</keyword>
<keyword id="KW-0832">Ubl conjugation</keyword>
<keyword id="KW-0833">Ubl conjugation pathway</keyword>
<comment type="function">
    <text evidence="1 2">Ubiquitin-like modifier which can be covalently attached via an isopeptide bond to substrate proteins as a monomer or a lysine-linked polymer (By similarity). The so-called ufmylation requires the ufm-1-activating E1 enzyme uba-5, the ufm-1-conjugating E2 enzyme ufc-1, and probably the ufm-1-ligase E3 enzyme ufl-1 (By similarity).</text>
</comment>
<comment type="subunit">
    <text evidence="1">Interacts with odr-8; leading to deufmylation.</text>
</comment>
<comment type="similarity">
    <text evidence="4">Belongs to the UFM1 family.</text>
</comment>
<feature type="chain" id="PRO_0000042138" description="Ubiquitin-fold modifier 1">
    <location>
        <begin position="1"/>
        <end position="91"/>
    </location>
</feature>
<feature type="propeptide" id="PRO_0000042139" description="Removed in mature form" evidence="2">
    <location>
        <begin position="92"/>
        <end position="93"/>
    </location>
</feature>
<feature type="cross-link" description="Glycyl lysine isopeptide (Lys-Gly) (interchain with G-Cter in UFM1)" evidence="2">
    <location>
        <position position="77"/>
    </location>
</feature>
<feature type="cross-link" description="Glycyl lysine isopeptide (Gly-Lys) (interchain with K-? in acceptor proteins)" evidence="3">
    <location>
        <position position="91"/>
    </location>
</feature>
<name>UFM1_CAEBR</name>